<comment type="function">
    <text evidence="1">Accelerates the degradation of transcripts by removing pyrophosphate from the 5'-end of triphosphorylated RNA, leading to a more labile monophosphorylated state that can stimulate subsequent ribonuclease cleavage.</text>
</comment>
<comment type="cofactor">
    <cofactor evidence="1">
        <name>a divalent metal cation</name>
        <dbReference type="ChEBI" id="CHEBI:60240"/>
    </cofactor>
</comment>
<comment type="similarity">
    <text evidence="1">Belongs to the Nudix hydrolase family. RppH subfamily.</text>
</comment>
<dbReference type="EC" id="3.6.1.-" evidence="1"/>
<dbReference type="EMBL" id="CP000548">
    <property type="protein sequence ID" value="ABO04612.1"/>
    <property type="molecule type" value="Genomic_DNA"/>
</dbReference>
<dbReference type="RefSeq" id="WP_004194263.1">
    <property type="nucleotide sequence ID" value="NZ_CP007802.1"/>
</dbReference>
<dbReference type="SMR" id="A3MR94"/>
<dbReference type="KEGG" id="bmaz:BM44_104"/>
<dbReference type="KEGG" id="bmn:BMA10247_3264"/>
<dbReference type="PATRIC" id="fig|320389.8.peg.112"/>
<dbReference type="GO" id="GO:0016462">
    <property type="term" value="F:pyrophosphatase activity"/>
    <property type="evidence" value="ECO:0007669"/>
    <property type="project" value="UniProtKB-ARBA"/>
</dbReference>
<dbReference type="CDD" id="cd03671">
    <property type="entry name" value="NUDIX_Ap4A_hydrolase_plant_like"/>
    <property type="match status" value="1"/>
</dbReference>
<dbReference type="Gene3D" id="3.90.79.10">
    <property type="entry name" value="Nucleoside Triphosphate Pyrophosphohydrolase"/>
    <property type="match status" value="1"/>
</dbReference>
<dbReference type="HAMAP" id="MF_00298">
    <property type="entry name" value="Nudix_RppH"/>
    <property type="match status" value="1"/>
</dbReference>
<dbReference type="InterPro" id="IPR020476">
    <property type="entry name" value="Nudix_hydrolase"/>
</dbReference>
<dbReference type="InterPro" id="IPR015797">
    <property type="entry name" value="NUDIX_hydrolase-like_dom_sf"/>
</dbReference>
<dbReference type="InterPro" id="IPR020084">
    <property type="entry name" value="NUDIX_hydrolase_CS"/>
</dbReference>
<dbReference type="InterPro" id="IPR000086">
    <property type="entry name" value="NUDIX_hydrolase_dom"/>
</dbReference>
<dbReference type="InterPro" id="IPR022927">
    <property type="entry name" value="RppH"/>
</dbReference>
<dbReference type="NCBIfam" id="NF001935">
    <property type="entry name" value="PRK00714.1-2"/>
    <property type="match status" value="1"/>
</dbReference>
<dbReference type="NCBIfam" id="NF001937">
    <property type="entry name" value="PRK00714.1-4"/>
    <property type="match status" value="1"/>
</dbReference>
<dbReference type="NCBIfam" id="NF001938">
    <property type="entry name" value="PRK00714.1-5"/>
    <property type="match status" value="1"/>
</dbReference>
<dbReference type="PANTHER" id="PTHR43736">
    <property type="entry name" value="ADP-RIBOSE PYROPHOSPHATASE"/>
    <property type="match status" value="1"/>
</dbReference>
<dbReference type="PANTHER" id="PTHR43736:SF1">
    <property type="entry name" value="DIHYDRONEOPTERIN TRIPHOSPHATE DIPHOSPHATASE"/>
    <property type="match status" value="1"/>
</dbReference>
<dbReference type="Pfam" id="PF00293">
    <property type="entry name" value="NUDIX"/>
    <property type="match status" value="1"/>
</dbReference>
<dbReference type="PRINTS" id="PR00502">
    <property type="entry name" value="NUDIXFAMILY"/>
</dbReference>
<dbReference type="SUPFAM" id="SSF55811">
    <property type="entry name" value="Nudix"/>
    <property type="match status" value="1"/>
</dbReference>
<dbReference type="PROSITE" id="PS51462">
    <property type="entry name" value="NUDIX"/>
    <property type="match status" value="1"/>
</dbReference>
<dbReference type="PROSITE" id="PS00893">
    <property type="entry name" value="NUDIX_BOX"/>
    <property type="match status" value="1"/>
</dbReference>
<evidence type="ECO:0000255" key="1">
    <source>
        <dbReference type="HAMAP-Rule" id="MF_00298"/>
    </source>
</evidence>
<evidence type="ECO:0000256" key="2">
    <source>
        <dbReference type="SAM" id="MobiDB-lite"/>
    </source>
</evidence>
<reference key="1">
    <citation type="journal article" date="2010" name="Genome Biol. Evol.">
        <title>Continuing evolution of Burkholderia mallei through genome reduction and large-scale rearrangements.</title>
        <authorList>
            <person name="Losada L."/>
            <person name="Ronning C.M."/>
            <person name="DeShazer D."/>
            <person name="Woods D."/>
            <person name="Fedorova N."/>
            <person name="Kim H.S."/>
            <person name="Shabalina S.A."/>
            <person name="Pearson T.R."/>
            <person name="Brinkac L."/>
            <person name="Tan P."/>
            <person name="Nandi T."/>
            <person name="Crabtree J."/>
            <person name="Badger J."/>
            <person name="Beckstrom-Sternberg S."/>
            <person name="Saqib M."/>
            <person name="Schutzer S.E."/>
            <person name="Keim P."/>
            <person name="Nierman W.C."/>
        </authorList>
    </citation>
    <scope>NUCLEOTIDE SEQUENCE [LARGE SCALE GENOMIC DNA]</scope>
    <source>
        <strain>NCTC 10247</strain>
    </source>
</reference>
<name>RPPH_BURM7</name>
<sequence length="216" mass="25263">MLDREGFRPNVGIILLNAHNEVFWGKRLREHSWQFPQGGIKYGETPMQAMYRELHEETGLLPEHVKIIGRTRDWLRYEVPDKFIKREVRGHYRGQKQIWFLLRMVGRDCDICLRATDHPEFDAWRWNEYWVPLDAVIEFKRDVYQLALTELSRFLRRPAQRTDKSRGPRAPRYPRVANGHAASEAPAAIDTSAVCSEVEPGANALDETPPRVSLRD</sequence>
<protein>
    <recommendedName>
        <fullName evidence="1">RNA pyrophosphohydrolase</fullName>
        <ecNumber evidence="1">3.6.1.-</ecNumber>
    </recommendedName>
    <alternativeName>
        <fullName evidence="1">(Di)nucleoside polyphosphate hydrolase</fullName>
    </alternativeName>
</protein>
<feature type="chain" id="PRO_1000021934" description="RNA pyrophosphohydrolase">
    <location>
        <begin position="1"/>
        <end position="216"/>
    </location>
</feature>
<feature type="domain" description="Nudix hydrolase" evidence="1">
    <location>
        <begin position="6"/>
        <end position="149"/>
    </location>
</feature>
<feature type="region of interest" description="Disordered" evidence="2">
    <location>
        <begin position="159"/>
        <end position="188"/>
    </location>
</feature>
<feature type="short sequence motif" description="Nudix box">
    <location>
        <begin position="38"/>
        <end position="59"/>
    </location>
</feature>
<accession>A3MR94</accession>
<keyword id="KW-0378">Hydrolase</keyword>
<proteinExistence type="inferred from homology"/>
<gene>
    <name evidence="1" type="primary">rppH</name>
    <name evidence="1" type="synonym">nudH</name>
    <name type="ordered locus">BMA10247_3264</name>
</gene>
<organism>
    <name type="scientific">Burkholderia mallei (strain NCTC 10247)</name>
    <dbReference type="NCBI Taxonomy" id="320389"/>
    <lineage>
        <taxon>Bacteria</taxon>
        <taxon>Pseudomonadati</taxon>
        <taxon>Pseudomonadota</taxon>
        <taxon>Betaproteobacteria</taxon>
        <taxon>Burkholderiales</taxon>
        <taxon>Burkholderiaceae</taxon>
        <taxon>Burkholderia</taxon>
        <taxon>pseudomallei group</taxon>
    </lineage>
</organism>